<organism>
    <name type="scientific">Lotus japonicus</name>
    <name type="common">Lotus corniculatus var. japonicus</name>
    <dbReference type="NCBI Taxonomy" id="34305"/>
    <lineage>
        <taxon>Eukaryota</taxon>
        <taxon>Viridiplantae</taxon>
        <taxon>Streptophyta</taxon>
        <taxon>Embryophyta</taxon>
        <taxon>Tracheophyta</taxon>
        <taxon>Spermatophyta</taxon>
        <taxon>Magnoliopsida</taxon>
        <taxon>eudicotyledons</taxon>
        <taxon>Gunneridae</taxon>
        <taxon>Pentapetalae</taxon>
        <taxon>rosids</taxon>
        <taxon>fabids</taxon>
        <taxon>Fabales</taxon>
        <taxon>Fabaceae</taxon>
        <taxon>Papilionoideae</taxon>
        <taxon>50 kb inversion clade</taxon>
        <taxon>NPAAA clade</taxon>
        <taxon>Hologalegina</taxon>
        <taxon>robinioid clade</taxon>
        <taxon>Loteae</taxon>
        <taxon>Lotus</taxon>
    </lineage>
</organism>
<proteinExistence type="inferred from homology"/>
<accession>Q9BBT3</accession>
<comment type="function">
    <text evidence="1">Binds 16S rRNA, required for the assembly of 30S particles.</text>
</comment>
<comment type="subunit">
    <text evidence="1">Part of the 30S ribosomal subunit.</text>
</comment>
<comment type="subcellular location">
    <subcellularLocation>
        <location>Plastid</location>
        <location>Chloroplast</location>
    </subcellularLocation>
</comment>
<comment type="similarity">
    <text evidence="1">Belongs to the universal ribosomal protein uS14 family.</text>
</comment>
<geneLocation type="chloroplast"/>
<gene>
    <name evidence="1" type="primary">rps14</name>
</gene>
<name>RR14_LOTJA</name>
<dbReference type="EMBL" id="AP002983">
    <property type="protein sequence ID" value="BAB33188.1"/>
    <property type="molecule type" value="Genomic_DNA"/>
</dbReference>
<dbReference type="RefSeq" id="NP_084790.1">
    <property type="nucleotide sequence ID" value="NC_002694.1"/>
</dbReference>
<dbReference type="SMR" id="Q9BBT3"/>
<dbReference type="GeneID" id="802886"/>
<dbReference type="GO" id="GO:0009507">
    <property type="term" value="C:chloroplast"/>
    <property type="evidence" value="ECO:0007669"/>
    <property type="project" value="UniProtKB-SubCell"/>
</dbReference>
<dbReference type="GO" id="GO:0015935">
    <property type="term" value="C:small ribosomal subunit"/>
    <property type="evidence" value="ECO:0007669"/>
    <property type="project" value="TreeGrafter"/>
</dbReference>
<dbReference type="GO" id="GO:0019843">
    <property type="term" value="F:rRNA binding"/>
    <property type="evidence" value="ECO:0007669"/>
    <property type="project" value="UniProtKB-UniRule"/>
</dbReference>
<dbReference type="GO" id="GO:0003735">
    <property type="term" value="F:structural constituent of ribosome"/>
    <property type="evidence" value="ECO:0007669"/>
    <property type="project" value="InterPro"/>
</dbReference>
<dbReference type="GO" id="GO:0006412">
    <property type="term" value="P:translation"/>
    <property type="evidence" value="ECO:0007669"/>
    <property type="project" value="UniProtKB-UniRule"/>
</dbReference>
<dbReference type="FunFam" id="1.10.287.1480:FF:000001">
    <property type="entry name" value="30S ribosomal protein S14"/>
    <property type="match status" value="1"/>
</dbReference>
<dbReference type="Gene3D" id="1.10.287.1480">
    <property type="match status" value="1"/>
</dbReference>
<dbReference type="HAMAP" id="MF_00537">
    <property type="entry name" value="Ribosomal_uS14_1"/>
    <property type="match status" value="1"/>
</dbReference>
<dbReference type="InterPro" id="IPR001209">
    <property type="entry name" value="Ribosomal_uS14"/>
</dbReference>
<dbReference type="InterPro" id="IPR023036">
    <property type="entry name" value="Ribosomal_uS14_bac/plastid"/>
</dbReference>
<dbReference type="InterPro" id="IPR018271">
    <property type="entry name" value="Ribosomal_uS14_CS"/>
</dbReference>
<dbReference type="NCBIfam" id="NF006477">
    <property type="entry name" value="PRK08881.1"/>
    <property type="match status" value="1"/>
</dbReference>
<dbReference type="PANTHER" id="PTHR19836">
    <property type="entry name" value="30S RIBOSOMAL PROTEIN S14"/>
    <property type="match status" value="1"/>
</dbReference>
<dbReference type="PANTHER" id="PTHR19836:SF19">
    <property type="entry name" value="SMALL RIBOSOMAL SUBUNIT PROTEIN US14M"/>
    <property type="match status" value="1"/>
</dbReference>
<dbReference type="Pfam" id="PF00253">
    <property type="entry name" value="Ribosomal_S14"/>
    <property type="match status" value="1"/>
</dbReference>
<dbReference type="SUPFAM" id="SSF57716">
    <property type="entry name" value="Glucocorticoid receptor-like (DNA-binding domain)"/>
    <property type="match status" value="1"/>
</dbReference>
<dbReference type="PROSITE" id="PS00527">
    <property type="entry name" value="RIBOSOMAL_S14"/>
    <property type="match status" value="1"/>
</dbReference>
<protein>
    <recommendedName>
        <fullName evidence="1">Small ribosomal subunit protein uS14c</fullName>
    </recommendedName>
    <alternativeName>
        <fullName evidence="2">30S ribosomal protein S14, chloroplastic</fullName>
    </alternativeName>
</protein>
<reference key="1">
    <citation type="journal article" date="2000" name="DNA Res.">
        <title>Complete structure of the chloroplast genome of a legume, Lotus japonicus.</title>
        <authorList>
            <person name="Kato T."/>
            <person name="Kaneko T."/>
            <person name="Sato S."/>
            <person name="Nakamura Y."/>
            <person name="Tabata S."/>
        </authorList>
    </citation>
    <scope>NUCLEOTIDE SEQUENCE [LARGE SCALE GENOMIC DNA]</scope>
    <source>
        <strain>cv. Miyakojima MG-20</strain>
    </source>
</reference>
<sequence>MARKSLIQREKKRQKLEQKYHLIRRSSKKEISKVPSLSEKWKIHGKLESLPRNSAPTRLHRRCFSTGRPRANYRDFGLSGHTLREMVHECLLPGATRSSW</sequence>
<keyword id="KW-0150">Chloroplast</keyword>
<keyword id="KW-0934">Plastid</keyword>
<keyword id="KW-0687">Ribonucleoprotein</keyword>
<keyword id="KW-0689">Ribosomal protein</keyword>
<keyword id="KW-0694">RNA-binding</keyword>
<keyword id="KW-0699">rRNA-binding</keyword>
<evidence type="ECO:0000255" key="1">
    <source>
        <dbReference type="HAMAP-Rule" id="MF_00537"/>
    </source>
</evidence>
<evidence type="ECO:0000305" key="2"/>
<feature type="chain" id="PRO_0000130974" description="Small ribosomal subunit protein uS14c">
    <location>
        <begin position="1"/>
        <end position="100"/>
    </location>
</feature>